<evidence type="ECO:0000255" key="1">
    <source>
        <dbReference type="HAMAP-Rule" id="MF_00651"/>
    </source>
</evidence>
<evidence type="ECO:0000305" key="2"/>
<sequence>MICPGMDDFAAALPRVGALAGLDLGTKTIGVAVSDTLRGIATPLRTIRREKFSLDLADLMKTVAERQIAGFVLGLPVNMDGSEGPRAQSTRAFARNLEKLTPLPITFWDERLSTVAAERAMLEADLSRKRRAELVDHVAAGFILQGALDRLAHLGRAHG</sequence>
<keyword id="KW-0963">Cytoplasm</keyword>
<keyword id="KW-0378">Hydrolase</keyword>
<keyword id="KW-0540">Nuclease</keyword>
<keyword id="KW-1185">Reference proteome</keyword>
<keyword id="KW-0690">Ribosome biogenesis</keyword>
<feature type="chain" id="PRO_0000172126" description="Putative pre-16S rRNA nuclease">
    <location>
        <begin position="1"/>
        <end position="159"/>
    </location>
</feature>
<feature type="sequence conflict" description="In Ref. 1; AAB01816." evidence="2" ref="1">
    <original>S</original>
    <variation>T</variation>
    <location>
        <position position="53"/>
    </location>
</feature>
<feature type="sequence conflict" description="In Ref. 1; AAB01816." evidence="2" ref="1">
    <original>L</original>
    <variation>V</variation>
    <location>
        <position position="56"/>
    </location>
</feature>
<organism>
    <name type="scientific">Rhodobacter capsulatus (strain ATCC BAA-309 / NBRC 16581 / SB1003)</name>
    <dbReference type="NCBI Taxonomy" id="272942"/>
    <lineage>
        <taxon>Bacteria</taxon>
        <taxon>Pseudomonadati</taxon>
        <taxon>Pseudomonadota</taxon>
        <taxon>Alphaproteobacteria</taxon>
        <taxon>Rhodobacterales</taxon>
        <taxon>Rhodobacter group</taxon>
        <taxon>Rhodobacter</taxon>
    </lineage>
</organism>
<name>YQGF_RHOCB</name>
<dbReference type="EC" id="3.1.-.-" evidence="1"/>
<dbReference type="EMBL" id="U46071">
    <property type="protein sequence ID" value="AAB01816.1"/>
    <property type="molecule type" value="Genomic_DNA"/>
</dbReference>
<dbReference type="EMBL" id="CP001312">
    <property type="protein sequence ID" value="ADE86048.1"/>
    <property type="molecule type" value="Genomic_DNA"/>
</dbReference>
<dbReference type="RefSeq" id="WP_013068027.1">
    <property type="nucleotide sequence ID" value="NC_014034.1"/>
</dbReference>
<dbReference type="SMR" id="Q52673"/>
<dbReference type="STRING" id="272942.RCAP_rcc02318"/>
<dbReference type="GeneID" id="31491153"/>
<dbReference type="KEGG" id="rcp:RCAP_rcc02318"/>
<dbReference type="eggNOG" id="COG0816">
    <property type="taxonomic scope" value="Bacteria"/>
</dbReference>
<dbReference type="HOGENOM" id="CLU_098240_1_1_5"/>
<dbReference type="OrthoDB" id="9796140at2"/>
<dbReference type="Proteomes" id="UP000002361">
    <property type="component" value="Chromosome"/>
</dbReference>
<dbReference type="GO" id="GO:0005829">
    <property type="term" value="C:cytosol"/>
    <property type="evidence" value="ECO:0007669"/>
    <property type="project" value="TreeGrafter"/>
</dbReference>
<dbReference type="GO" id="GO:0004518">
    <property type="term" value="F:nuclease activity"/>
    <property type="evidence" value="ECO:0007669"/>
    <property type="project" value="UniProtKB-KW"/>
</dbReference>
<dbReference type="GO" id="GO:0000967">
    <property type="term" value="P:rRNA 5'-end processing"/>
    <property type="evidence" value="ECO:0007669"/>
    <property type="project" value="UniProtKB-UniRule"/>
</dbReference>
<dbReference type="CDD" id="cd16964">
    <property type="entry name" value="YqgF"/>
    <property type="match status" value="1"/>
</dbReference>
<dbReference type="Gene3D" id="3.30.420.140">
    <property type="entry name" value="YqgF/RNase H-like domain"/>
    <property type="match status" value="1"/>
</dbReference>
<dbReference type="HAMAP" id="MF_00651">
    <property type="entry name" value="Nuclease_YqgF"/>
    <property type="match status" value="1"/>
</dbReference>
<dbReference type="InterPro" id="IPR012337">
    <property type="entry name" value="RNaseH-like_sf"/>
</dbReference>
<dbReference type="InterPro" id="IPR005227">
    <property type="entry name" value="YqgF"/>
</dbReference>
<dbReference type="InterPro" id="IPR006641">
    <property type="entry name" value="YqgF/RNaseH-like_dom"/>
</dbReference>
<dbReference type="InterPro" id="IPR037027">
    <property type="entry name" value="YqgF/RNaseH-like_dom_sf"/>
</dbReference>
<dbReference type="NCBIfam" id="TIGR00250">
    <property type="entry name" value="RNAse_H_YqgF"/>
    <property type="match status" value="1"/>
</dbReference>
<dbReference type="PANTHER" id="PTHR33317">
    <property type="entry name" value="POLYNUCLEOTIDYL TRANSFERASE, RIBONUCLEASE H-LIKE SUPERFAMILY PROTEIN"/>
    <property type="match status" value="1"/>
</dbReference>
<dbReference type="PANTHER" id="PTHR33317:SF4">
    <property type="entry name" value="POLYNUCLEOTIDYL TRANSFERASE, RIBONUCLEASE H-LIKE SUPERFAMILY PROTEIN"/>
    <property type="match status" value="1"/>
</dbReference>
<dbReference type="Pfam" id="PF03652">
    <property type="entry name" value="RuvX"/>
    <property type="match status" value="1"/>
</dbReference>
<dbReference type="SMART" id="SM00732">
    <property type="entry name" value="YqgFc"/>
    <property type="match status" value="1"/>
</dbReference>
<dbReference type="SUPFAM" id="SSF53098">
    <property type="entry name" value="Ribonuclease H-like"/>
    <property type="match status" value="1"/>
</dbReference>
<accession>Q52673</accession>
<accession>D5ALI7</accession>
<comment type="function">
    <text evidence="1">Could be a nuclease involved in processing of the 5'-end of pre-16S rRNA.</text>
</comment>
<comment type="subcellular location">
    <subcellularLocation>
        <location evidence="1">Cytoplasm</location>
    </subcellularLocation>
</comment>
<comment type="similarity">
    <text evidence="1">Belongs to the YqgF nuclease family.</text>
</comment>
<gene>
    <name type="primary">yqgF</name>
    <name type="ordered locus">RCAP_rcc02318</name>
</gene>
<proteinExistence type="inferred from homology"/>
<reference key="1">
    <citation type="submission" date="1996-01" db="EMBL/GenBank/DDBJ databases">
        <title>Rhodobacter capsulatus cycH: a bipartite gene that affects differentially the biogenesis of various c-type cytochromes.</title>
        <authorList>
            <person name="Lang S.E."/>
            <person name="Jenney F.E. Jr."/>
            <person name="Daldal F."/>
        </authorList>
    </citation>
    <scope>NUCLEOTIDE SEQUENCE [GENOMIC DNA]</scope>
    <source>
        <strain>MT1131</strain>
    </source>
</reference>
<reference key="2">
    <citation type="journal article" date="2010" name="J. Bacteriol.">
        <title>Complete genome sequence of the photosynthetic purple nonsulfur bacterium Rhodobacter capsulatus SB 1003.</title>
        <authorList>
            <person name="Strnad H."/>
            <person name="Lapidus A."/>
            <person name="Paces J."/>
            <person name="Ulbrich P."/>
            <person name="Vlcek C."/>
            <person name="Paces V."/>
            <person name="Haselkorn R."/>
        </authorList>
    </citation>
    <scope>NUCLEOTIDE SEQUENCE [LARGE SCALE GENOMIC DNA]</scope>
    <source>
        <strain>ATCC BAA-309 / NBRC 16581 / SB1003</strain>
    </source>
</reference>
<protein>
    <recommendedName>
        <fullName evidence="1">Putative pre-16S rRNA nuclease</fullName>
        <ecNumber evidence="1">3.1.-.-</ecNumber>
    </recommendedName>
</protein>